<dbReference type="EMBL" id="M11335">
    <property type="protein sequence ID" value="AAA34287.1"/>
    <property type="molecule type" value="mRNA"/>
</dbReference>
<dbReference type="PIR" id="S07398">
    <property type="entry name" value="S07398"/>
</dbReference>
<dbReference type="STRING" id="4565.P04730"/>
<dbReference type="Proteomes" id="UP000019116">
    <property type="component" value="Unplaced"/>
</dbReference>
<dbReference type="GO" id="GO:0045735">
    <property type="term" value="F:nutrient reservoir activity"/>
    <property type="evidence" value="ECO:0007669"/>
    <property type="project" value="UniProtKB-KW"/>
</dbReference>
<dbReference type="Gene3D" id="1.10.110.10">
    <property type="entry name" value="Plant lipid-transfer and hydrophobic proteins"/>
    <property type="match status" value="1"/>
</dbReference>
<dbReference type="InterPro" id="IPR036312">
    <property type="entry name" value="Bifun_inhib/LTP/seed_sf"/>
</dbReference>
<dbReference type="InterPro" id="IPR016140">
    <property type="entry name" value="Bifunc_inhib/LTP/seed_store"/>
</dbReference>
<dbReference type="InterPro" id="IPR001954">
    <property type="entry name" value="Glia_glutenin"/>
</dbReference>
<dbReference type="PANTHER" id="PTHR33454:SF18">
    <property type="entry name" value="GLUTENIN, LOW MOLECULAR WEIGHT SUBUNIT"/>
    <property type="match status" value="1"/>
</dbReference>
<dbReference type="PANTHER" id="PTHR33454">
    <property type="entry name" value="PROLAMIN PPROL 14P"/>
    <property type="match status" value="1"/>
</dbReference>
<dbReference type="Pfam" id="PF13016">
    <property type="entry name" value="Gliadin"/>
    <property type="match status" value="1"/>
</dbReference>
<dbReference type="PRINTS" id="PR00208">
    <property type="entry name" value="GLIADGLUTEN"/>
</dbReference>
<dbReference type="PRINTS" id="PR00209">
    <property type="entry name" value="GLIADIN"/>
</dbReference>
<dbReference type="SMART" id="SM00499">
    <property type="entry name" value="AAI"/>
    <property type="match status" value="1"/>
</dbReference>
<dbReference type="SUPFAM" id="SSF47699">
    <property type="entry name" value="Bifunctional inhibitor/lipid-transfer protein/seed storage 2S albumin"/>
    <property type="match status" value="1"/>
</dbReference>
<evidence type="ECO:0000256" key="1">
    <source>
        <dbReference type="SAM" id="MobiDB-lite"/>
    </source>
</evidence>
<evidence type="ECO:0000305" key="2"/>
<protein>
    <recommendedName>
        <fullName>Gamma-gliadin</fullName>
    </recommendedName>
    <alternativeName>
        <fullName>Gliadin B-III</fullName>
    </alternativeName>
</protein>
<proteinExistence type="evidence at transcript level"/>
<sequence>PQQPFPLQPQQSFLWQSQQPFLQQPQQPSPQPQQVVQIISPATPTTIPSAGKPTSAPFPQQQQQHQQLAQQQIPVVQPSILQQLNPCKVFLQQQCSPVAMPQRLARSQMLQQSSCHVMQQQCCQQLPQIPQQSRYQAIRAIIYSIILQEQQQVQGSIQSQQQQPQQLGQCVSQPQQQSQQQLGQQPQQQQLAQGTFLQPHQIAQLEVMTSIALRILPTMCSVNVPLYRTTTSVPFGVGTGVGAY</sequence>
<reference key="1">
    <citation type="journal article" date="1984" name="Plant Mol. Biol.">
        <title>Identification and DNA sequence analysis of a gamma-type gliadin cDNA plasmid from winter wheat.</title>
        <authorList>
            <person name="Okita T.W."/>
        </authorList>
        <dbReference type="AGRICOLA" id="IND85038079"/>
    </citation>
    <scope>NUCLEOTIDE SEQUENCE [MRNA]</scope>
</reference>
<feature type="chain" id="PRO_0000102598" description="Gamma-gliadin">
    <location>
        <begin position="1" status="less than"/>
        <end position="244"/>
    </location>
</feature>
<feature type="region of interest" description="Disordered" evidence="1">
    <location>
        <begin position="18"/>
        <end position="64"/>
    </location>
</feature>
<feature type="compositionally biased region" description="Polar residues" evidence="1">
    <location>
        <begin position="35"/>
        <end position="48"/>
    </location>
</feature>
<feature type="non-terminal residue">
    <location>
        <position position="1"/>
    </location>
</feature>
<keyword id="KW-1185">Reference proteome</keyword>
<keyword id="KW-0677">Repeat</keyword>
<keyword id="KW-0708">Seed storage protein</keyword>
<keyword id="KW-0758">Storage protein</keyword>
<name>GDB3_WHEAT</name>
<comment type="function">
    <text>Gliadin is the major seed storage protein in wheat.</text>
</comment>
<comment type="miscellaneous">
    <text>The gamma-gliadins can be divided into 3 homology classes. Sequence divergence between the classes is due to single-base substitutions and to duplications or deletions within or near direct repeats.</text>
</comment>
<comment type="similarity">
    <text evidence="2">Belongs to the gliadin/glutenin family.</text>
</comment>
<accession>P04730</accession>
<organism>
    <name type="scientific">Triticum aestivum</name>
    <name type="common">Wheat</name>
    <dbReference type="NCBI Taxonomy" id="4565"/>
    <lineage>
        <taxon>Eukaryota</taxon>
        <taxon>Viridiplantae</taxon>
        <taxon>Streptophyta</taxon>
        <taxon>Embryophyta</taxon>
        <taxon>Tracheophyta</taxon>
        <taxon>Spermatophyta</taxon>
        <taxon>Magnoliopsida</taxon>
        <taxon>Liliopsida</taxon>
        <taxon>Poales</taxon>
        <taxon>Poaceae</taxon>
        <taxon>BOP clade</taxon>
        <taxon>Pooideae</taxon>
        <taxon>Triticodae</taxon>
        <taxon>Triticeae</taxon>
        <taxon>Triticinae</taxon>
        <taxon>Triticum</taxon>
    </lineage>
</organism>